<keyword id="KW-0963">Cytoplasm</keyword>
<keyword id="KW-0255">Endonuclease</keyword>
<keyword id="KW-0378">Hydrolase</keyword>
<keyword id="KW-0479">Metal-binding</keyword>
<keyword id="KW-0540">Nuclease</keyword>
<keyword id="KW-1185">Reference proteome</keyword>
<proteinExistence type="inferred from homology"/>
<accession>Q3INN9</accession>
<name>PELO_NATPD</name>
<comment type="function">
    <text evidence="1">May function in recognizing stalled ribosomes, interact with stem-loop structures in stalled mRNA molecules, and effect endonucleolytic cleavage of the mRNA. May play a role in the release non-functional ribosomes and degradation of damaged mRNAs. Has endoribonuclease activity.</text>
</comment>
<comment type="cofactor">
    <cofactor evidence="1">
        <name>a divalent metal cation</name>
        <dbReference type="ChEBI" id="CHEBI:60240"/>
    </cofactor>
</comment>
<comment type="subunit">
    <text evidence="1">Monomer.</text>
</comment>
<comment type="subcellular location">
    <subcellularLocation>
        <location evidence="1">Cytoplasm</location>
    </subcellularLocation>
</comment>
<comment type="domain">
    <text evidence="1">The N-terminal domain has the RNA-binding Sm fold. It harbors the endoribonuclease activity.</text>
</comment>
<comment type="similarity">
    <text evidence="1">Belongs to the eukaryotic release factor 1 family. Pelota subfamily.</text>
</comment>
<evidence type="ECO:0000255" key="1">
    <source>
        <dbReference type="HAMAP-Rule" id="MF_01853"/>
    </source>
</evidence>
<organism>
    <name type="scientific">Natronomonas pharaonis (strain ATCC 35678 / DSM 2160 / CIP 103997 / JCM 8858 / NBRC 14720 / NCIMB 2260 / Gabara)</name>
    <name type="common">Halobacterium pharaonis</name>
    <dbReference type="NCBI Taxonomy" id="348780"/>
    <lineage>
        <taxon>Archaea</taxon>
        <taxon>Methanobacteriati</taxon>
        <taxon>Methanobacteriota</taxon>
        <taxon>Stenosarchaea group</taxon>
        <taxon>Halobacteria</taxon>
        <taxon>Halobacteriales</taxon>
        <taxon>Haloarculaceae</taxon>
        <taxon>Natronomonas</taxon>
    </lineage>
</organism>
<protein>
    <recommendedName>
        <fullName evidence="1">Protein pelota homolog</fullName>
        <ecNumber evidence="1">3.1.-.-</ecNumber>
    </recommendedName>
</protein>
<gene>
    <name evidence="1" type="primary">pelA</name>
    <name type="ordered locus">NP_4344A</name>
</gene>
<reference key="1">
    <citation type="journal article" date="2005" name="Genome Res.">
        <title>Living with two extremes: conclusions from the genome sequence of Natronomonas pharaonis.</title>
        <authorList>
            <person name="Falb M."/>
            <person name="Pfeiffer F."/>
            <person name="Palm P."/>
            <person name="Rodewald K."/>
            <person name="Hickmann V."/>
            <person name="Tittor J."/>
            <person name="Oesterhelt D."/>
        </authorList>
    </citation>
    <scope>NUCLEOTIDE SEQUENCE [LARGE SCALE GENOMIC DNA]</scope>
    <source>
        <strain>ATCC 35678 / DSM 2160 / CIP 103997 / JCM 8858 / NBRC 14720 / NCIMB 2260 / Gabara</strain>
    </source>
</reference>
<sequence>MRIVDRESAEGRRERITLVPETLDDLWHLTYVLEPGDLVAGDTTRRIQRDDDKMRDTGGEREPMWIRIDVNNVEFAKFANRLRVGGDIVDCSREDQLGFHHTFNVEEHDELTVEKVWQVDQLERLEEAVEAAEQPDVAIATVEEGQAHIHTVAQYGVEERASITGTTGKGEYARSRDELFEELAAILRRLDAEAIILAGPGFTKQDALEHIEDNAPEAAEKIQVVDTASVGDRGVHEVLKRGAVDRIQTETRVSKEAELIDELMERIGEGEKAAYGVDEVAEAAEFGAIETLLILDERLREERAGEGDWAVDVNDIIENVEQQGGEVVVFSHEFDPGQQLANLGGIAALLRYRLS</sequence>
<dbReference type="EC" id="3.1.-.-" evidence="1"/>
<dbReference type="EMBL" id="CR936257">
    <property type="protein sequence ID" value="CAI50263.1"/>
    <property type="molecule type" value="Genomic_DNA"/>
</dbReference>
<dbReference type="RefSeq" id="WP_011323879.1">
    <property type="nucleotide sequence ID" value="NC_007426.1"/>
</dbReference>
<dbReference type="SMR" id="Q3INN9"/>
<dbReference type="STRING" id="348780.NP_4344A"/>
<dbReference type="EnsemblBacteria" id="CAI50263">
    <property type="protein sequence ID" value="CAI50263"/>
    <property type="gene ID" value="NP_4344A"/>
</dbReference>
<dbReference type="GeneID" id="3703010"/>
<dbReference type="KEGG" id="nph:NP_4344A"/>
<dbReference type="eggNOG" id="arCOG01741">
    <property type="taxonomic scope" value="Archaea"/>
</dbReference>
<dbReference type="HOGENOM" id="CLU_023334_0_0_2"/>
<dbReference type="OrthoDB" id="31300at2157"/>
<dbReference type="Proteomes" id="UP000002698">
    <property type="component" value="Chromosome"/>
</dbReference>
<dbReference type="GO" id="GO:0005737">
    <property type="term" value="C:cytoplasm"/>
    <property type="evidence" value="ECO:0007669"/>
    <property type="project" value="UniProtKB-SubCell"/>
</dbReference>
<dbReference type="GO" id="GO:0004519">
    <property type="term" value="F:endonuclease activity"/>
    <property type="evidence" value="ECO:0007669"/>
    <property type="project" value="UniProtKB-UniRule"/>
</dbReference>
<dbReference type="GO" id="GO:0046872">
    <property type="term" value="F:metal ion binding"/>
    <property type="evidence" value="ECO:0007669"/>
    <property type="project" value="UniProtKB-UniRule"/>
</dbReference>
<dbReference type="GO" id="GO:0070651">
    <property type="term" value="P:nonfunctional rRNA decay"/>
    <property type="evidence" value="ECO:0007669"/>
    <property type="project" value="TreeGrafter"/>
</dbReference>
<dbReference type="GO" id="GO:0070966">
    <property type="term" value="P:nuclear-transcribed mRNA catabolic process, no-go decay"/>
    <property type="evidence" value="ECO:0007669"/>
    <property type="project" value="InterPro"/>
</dbReference>
<dbReference type="GO" id="GO:0070481">
    <property type="term" value="P:nuclear-transcribed mRNA catabolic process, non-stop decay"/>
    <property type="evidence" value="ECO:0007669"/>
    <property type="project" value="InterPro"/>
</dbReference>
<dbReference type="GO" id="GO:0032790">
    <property type="term" value="P:ribosome disassembly"/>
    <property type="evidence" value="ECO:0007669"/>
    <property type="project" value="TreeGrafter"/>
</dbReference>
<dbReference type="GO" id="GO:0071025">
    <property type="term" value="P:RNA surveillance"/>
    <property type="evidence" value="ECO:0007669"/>
    <property type="project" value="InterPro"/>
</dbReference>
<dbReference type="FunFam" id="2.30.30.870:FF:000002">
    <property type="entry name" value="Protein pelota homolog"/>
    <property type="match status" value="1"/>
</dbReference>
<dbReference type="Gene3D" id="3.30.1330.30">
    <property type="match status" value="1"/>
</dbReference>
<dbReference type="Gene3D" id="3.30.420.60">
    <property type="entry name" value="eRF1 domain 2"/>
    <property type="match status" value="1"/>
</dbReference>
<dbReference type="Gene3D" id="2.30.30.870">
    <property type="entry name" value="Pelota, domain A"/>
    <property type="match status" value="1"/>
</dbReference>
<dbReference type="HAMAP" id="MF_01853">
    <property type="entry name" value="PelO"/>
    <property type="match status" value="1"/>
</dbReference>
<dbReference type="InterPro" id="IPR042226">
    <property type="entry name" value="eFR1_2_sf"/>
</dbReference>
<dbReference type="InterPro" id="IPR005140">
    <property type="entry name" value="eRF1_1_Pelota"/>
</dbReference>
<dbReference type="InterPro" id="IPR005141">
    <property type="entry name" value="eRF1_2"/>
</dbReference>
<dbReference type="InterPro" id="IPR005142">
    <property type="entry name" value="eRF1_3"/>
</dbReference>
<dbReference type="InterPro" id="IPR038069">
    <property type="entry name" value="Pelota/DOM34_N"/>
</dbReference>
<dbReference type="InterPro" id="IPR023521">
    <property type="entry name" value="Pelota_arc"/>
</dbReference>
<dbReference type="InterPro" id="IPR029064">
    <property type="entry name" value="Ribosomal_eL30-like_sf"/>
</dbReference>
<dbReference type="InterPro" id="IPR004405">
    <property type="entry name" value="Transl-rel_pelota"/>
</dbReference>
<dbReference type="NCBIfam" id="TIGR00111">
    <property type="entry name" value="pelota"/>
    <property type="match status" value="1"/>
</dbReference>
<dbReference type="PANTHER" id="PTHR10853">
    <property type="entry name" value="PELOTA"/>
    <property type="match status" value="1"/>
</dbReference>
<dbReference type="PANTHER" id="PTHR10853:SF0">
    <property type="entry name" value="PROTEIN PELOTA HOMOLOG"/>
    <property type="match status" value="1"/>
</dbReference>
<dbReference type="Pfam" id="PF03463">
    <property type="entry name" value="eRF1_1"/>
    <property type="match status" value="1"/>
</dbReference>
<dbReference type="Pfam" id="PF03464">
    <property type="entry name" value="eRF1_2"/>
    <property type="match status" value="1"/>
</dbReference>
<dbReference type="Pfam" id="PF03465">
    <property type="entry name" value="eRF1_3"/>
    <property type="match status" value="1"/>
</dbReference>
<dbReference type="SMART" id="SM01194">
    <property type="entry name" value="eRF1_1"/>
    <property type="match status" value="1"/>
</dbReference>
<dbReference type="SUPFAM" id="SSF159065">
    <property type="entry name" value="Dom34/Pelota N-terminal domain-like"/>
    <property type="match status" value="1"/>
</dbReference>
<dbReference type="SUPFAM" id="SSF55315">
    <property type="entry name" value="L30e-like"/>
    <property type="match status" value="1"/>
</dbReference>
<dbReference type="SUPFAM" id="SSF53137">
    <property type="entry name" value="Translational machinery components"/>
    <property type="match status" value="1"/>
</dbReference>
<feature type="chain" id="PRO_0000361810" description="Protein pelota homolog">
    <location>
        <begin position="1"/>
        <end position="355"/>
    </location>
</feature>